<protein>
    <recommendedName>
        <fullName evidence="1">N-acetylglucosaminyldiphosphoundecaprenol N-acetyl-beta-D-mannosaminyltransferase</fullName>
        <ecNumber evidence="1">2.4.1.187</ecNumber>
    </recommendedName>
    <alternativeName>
        <fullName evidence="1">N-acetylmannosaminyltransferase</fullName>
    </alternativeName>
    <alternativeName>
        <fullName evidence="1">UDP-N-acetylmannosamine transferase</fullName>
    </alternativeName>
    <alternativeName>
        <fullName evidence="1">UDP-N-acetylmannosamine:N-acetylglucosaminyl pyrophosphorylundecaprenol N-acetylmannosaminyltransferase</fullName>
    </alternativeName>
</protein>
<organism>
    <name type="scientific">Staphylococcus aureus (strain MRSA252)</name>
    <dbReference type="NCBI Taxonomy" id="282458"/>
    <lineage>
        <taxon>Bacteria</taxon>
        <taxon>Bacillati</taxon>
        <taxon>Bacillota</taxon>
        <taxon>Bacilli</taxon>
        <taxon>Bacillales</taxon>
        <taxon>Staphylococcaceae</taxon>
        <taxon>Staphylococcus</taxon>
    </lineage>
</organism>
<dbReference type="EC" id="2.4.1.187" evidence="1"/>
<dbReference type="EMBL" id="BX571856">
    <property type="protein sequence ID" value="CAG39663.1"/>
    <property type="molecule type" value="Genomic_DNA"/>
</dbReference>
<dbReference type="RefSeq" id="WP_000215382.1">
    <property type="nucleotide sequence ID" value="NC_002952.2"/>
</dbReference>
<dbReference type="SMR" id="Q6GJ34"/>
<dbReference type="CAZy" id="GT26">
    <property type="family name" value="Glycosyltransferase Family 26"/>
</dbReference>
<dbReference type="KEGG" id="sar:SAR0646"/>
<dbReference type="HOGENOM" id="CLU_063203_3_1_9"/>
<dbReference type="UniPathway" id="UPA00790"/>
<dbReference type="Proteomes" id="UP000000596">
    <property type="component" value="Chromosome"/>
</dbReference>
<dbReference type="GO" id="GO:0047244">
    <property type="term" value="F:N-acetylglucosaminyldiphosphoundecaprenol N-acetyl-beta-D-mannosaminyltransferase activity"/>
    <property type="evidence" value="ECO:0007669"/>
    <property type="project" value="UniProtKB-UniRule"/>
</dbReference>
<dbReference type="GO" id="GO:0071555">
    <property type="term" value="P:cell wall organization"/>
    <property type="evidence" value="ECO:0007669"/>
    <property type="project" value="UniProtKB-KW"/>
</dbReference>
<dbReference type="GO" id="GO:0019350">
    <property type="term" value="P:teichoic acid biosynthetic process"/>
    <property type="evidence" value="ECO:0007669"/>
    <property type="project" value="UniProtKB-UniRule"/>
</dbReference>
<dbReference type="CDD" id="cd06533">
    <property type="entry name" value="Glyco_transf_WecG_TagA"/>
    <property type="match status" value="1"/>
</dbReference>
<dbReference type="HAMAP" id="MF_02070">
    <property type="entry name" value="TagA_TarA"/>
    <property type="match status" value="1"/>
</dbReference>
<dbReference type="InterPro" id="IPR053391">
    <property type="entry name" value="TAB_Glycosyltransferase"/>
</dbReference>
<dbReference type="InterPro" id="IPR034714">
    <property type="entry name" value="TagA_TarA"/>
</dbReference>
<dbReference type="InterPro" id="IPR004629">
    <property type="entry name" value="WecG_TagA_CpsF"/>
</dbReference>
<dbReference type="NCBIfam" id="NF041710">
    <property type="entry name" value="UDPacetylman_taseTarA"/>
    <property type="match status" value="1"/>
</dbReference>
<dbReference type="NCBIfam" id="TIGR00696">
    <property type="entry name" value="wecG_tagA_cpsF"/>
    <property type="match status" value="1"/>
</dbReference>
<dbReference type="PANTHER" id="PTHR34136">
    <property type="match status" value="1"/>
</dbReference>
<dbReference type="PANTHER" id="PTHR34136:SF1">
    <property type="entry name" value="UDP-N-ACETYL-D-MANNOSAMINURONIC ACID TRANSFERASE"/>
    <property type="match status" value="1"/>
</dbReference>
<dbReference type="Pfam" id="PF03808">
    <property type="entry name" value="Glyco_tran_WecG"/>
    <property type="match status" value="1"/>
</dbReference>
<feature type="chain" id="PRO_0000208444" description="N-acetylglucosaminyldiphosphoundecaprenol N-acetyl-beta-D-mannosaminyltransferase">
    <location>
        <begin position="1"/>
        <end position="254"/>
    </location>
</feature>
<reference key="1">
    <citation type="journal article" date="2004" name="Proc. Natl. Acad. Sci. U.S.A.">
        <title>Complete genomes of two clinical Staphylococcus aureus strains: evidence for the rapid evolution of virulence and drug resistance.</title>
        <authorList>
            <person name="Holden M.T.G."/>
            <person name="Feil E.J."/>
            <person name="Lindsay J.A."/>
            <person name="Peacock S.J."/>
            <person name="Day N.P.J."/>
            <person name="Enright M.C."/>
            <person name="Foster T.J."/>
            <person name="Moore C.E."/>
            <person name="Hurst L."/>
            <person name="Atkin R."/>
            <person name="Barron A."/>
            <person name="Bason N."/>
            <person name="Bentley S.D."/>
            <person name="Chillingworth C."/>
            <person name="Chillingworth T."/>
            <person name="Churcher C."/>
            <person name="Clark L."/>
            <person name="Corton C."/>
            <person name="Cronin A."/>
            <person name="Doggett J."/>
            <person name="Dowd L."/>
            <person name="Feltwell T."/>
            <person name="Hance Z."/>
            <person name="Harris B."/>
            <person name="Hauser H."/>
            <person name="Holroyd S."/>
            <person name="Jagels K."/>
            <person name="James K.D."/>
            <person name="Lennard N."/>
            <person name="Line A."/>
            <person name="Mayes R."/>
            <person name="Moule S."/>
            <person name="Mungall K."/>
            <person name="Ormond D."/>
            <person name="Quail M.A."/>
            <person name="Rabbinowitsch E."/>
            <person name="Rutherford K.M."/>
            <person name="Sanders M."/>
            <person name="Sharp S."/>
            <person name="Simmonds M."/>
            <person name="Stevens K."/>
            <person name="Whitehead S."/>
            <person name="Barrell B.G."/>
            <person name="Spratt B.G."/>
            <person name="Parkhill J."/>
        </authorList>
    </citation>
    <scope>NUCLEOTIDE SEQUENCE [LARGE SCALE GENOMIC DNA]</scope>
    <source>
        <strain>MRSA252</strain>
    </source>
</reference>
<sequence>MTVEERSNTAKVDILGVDFDNTTMLQMVENIKTFFANQSTNNLFIVTANPEIVNYATTHQAYLELINQASYIVADGTGVVKASHRLKQPLAHRIPGIELMDECLKIAHVNHQKVFLLGATNEVGEAAQYALQQRYPNISFAHHHGYIDLEDETVVKRIELFKPDYIFVGMGFPKQEEWIMTHENQFESKVMMGVGGSLEVFAGAKKRAPYIFRKLNIEWIYRALIDWKRIGRLKSIPIFMYKIAKAKRKIKKAK</sequence>
<proteinExistence type="inferred from homology"/>
<comment type="function">
    <text evidence="1">Catalyzes the conversion of GlcNAc-PP-undecaprenol into ManNAc-GlcNAc-PP-undecaprenol, the first committed lipid intermediate in the de novo synthesis of teichoic acid.</text>
</comment>
<comment type="catalytic activity">
    <reaction evidence="1">
        <text>UDP-N-acetyl-alpha-D-mannosamine + N-acetyl-alpha-D-glucosaminyl-di-trans,octa-cis-undecaprenyl diphosphate = N-acetyl-beta-D-mannosaminyl-(1-&gt;4)-N-acetyl-alpha-D-glucosaminyl di-trans,octa-cis-undecaprenyl diphosphate + UDP + H(+)</text>
        <dbReference type="Rhea" id="RHEA:16053"/>
        <dbReference type="ChEBI" id="CHEBI:15378"/>
        <dbReference type="ChEBI" id="CHEBI:58223"/>
        <dbReference type="ChEBI" id="CHEBI:62959"/>
        <dbReference type="ChEBI" id="CHEBI:68623"/>
        <dbReference type="ChEBI" id="CHEBI:132210"/>
        <dbReference type="EC" id="2.4.1.187"/>
    </reaction>
</comment>
<comment type="pathway">
    <text evidence="2">Cell wall biogenesis; poly(ribitol phosphate) teichoic acid biosynthesis.</text>
</comment>
<comment type="similarity">
    <text evidence="1">Belongs to the glycosyltransferase 26 family. TagA/TarA subfamily.</text>
</comment>
<name>TARA_STAAR</name>
<accession>Q6GJ34</accession>
<gene>
    <name type="primary">tarA</name>
    <name type="ordered locus">SAR0646</name>
</gene>
<evidence type="ECO:0000255" key="1">
    <source>
        <dbReference type="HAMAP-Rule" id="MF_02070"/>
    </source>
</evidence>
<evidence type="ECO:0000305" key="2"/>
<keyword id="KW-0961">Cell wall biogenesis/degradation</keyword>
<keyword id="KW-0328">Glycosyltransferase</keyword>
<keyword id="KW-0777">Teichoic acid biosynthesis</keyword>
<keyword id="KW-0808">Transferase</keyword>